<keyword id="KW-0067">ATP-binding</keyword>
<keyword id="KW-0547">Nucleotide-binding</keyword>
<keyword id="KW-0597">Phosphoprotein</keyword>
<keyword id="KW-1185">Reference proteome</keyword>
<keyword id="KW-0808">Transferase</keyword>
<keyword id="KW-0833">Ubl conjugation pathway</keyword>
<comment type="function">
    <text evidence="1">E2 ubiquitin-conjugating enzyme that accepts ubiquitin from an E1 ubiquitin-activating protein, and catalyzes its covalent attachment to other proteins by an E3 ubiquitin-protein ligase complex (By similarity). In vitro catalyzes monoubiquitination and 'Lys-48'-linked polyubiquitination (By similarity). Works in collaboration with various Cul1-RING and Cul2-RING E3 ligase complexes (By similarity). May be involved in degradation of katenin (By similarity).</text>
</comment>
<comment type="catalytic activity">
    <reaction evidence="1">
        <text>S-ubiquitinyl-[E1 ubiquitin-activating enzyme]-L-cysteine + [E2 ubiquitin-conjugating enzyme]-L-cysteine = [E1 ubiquitin-activating enzyme]-L-cysteine + S-ubiquitinyl-[E2 ubiquitin-conjugating enzyme]-L-cysteine.</text>
        <dbReference type="EC" id="2.3.2.23"/>
    </reaction>
</comment>
<comment type="activity regulation">
    <text evidence="1">Neddylation of CUL2 in the CRL2(FEM1C) E3 ligase complex increases substrate affinity of UBE2R2 and the ubiquitin-transfer rate in the E2-E3 complex.</text>
</comment>
<comment type="pathway">
    <text evidence="1">Protein modification; protein ubiquitination.</text>
</comment>
<comment type="subunit">
    <text evidence="1">Interacts with multiple Cul1-RING E3 ubiquitin-protein ligase complexes, also known as SCF (SKP1-CUL1-F-box protein) complexes, including SCF(FBXW7) and SCF(BTRC) (By similarity). Interacts with multiple Cul2-RING (CRL2) E3 ubiquitin-protein ligase complexes, also known as ECS (Elongin BC-CUL2/5-SOCS-box protein) complexes, including CRL2(FEM1C) and ECS(VHL) (By similarity). When phosphorylated, interacts with beta-TrCP (BTRC) (By similarity).</text>
</comment>
<comment type="similarity">
    <text evidence="2">Belongs to the ubiquitin-conjugating enzyme family.</text>
</comment>
<proteinExistence type="evidence at protein level"/>
<sequence>MAQQQMTSSQKALMLELKSLQEEPVEGFRITLVDESDLYNWEVAIFGPPNTLYEGGYFKAHIKFPIDYPYSPPTFRFLTKMWHPNIYENGDVCISILHPPVDDPQSGELPSERWNPTQNVRTILLSVISLLNEPNTFSPANVDASVMFRKWRDSKGKDKEYAEIIRKQVSATKAEAEKDGVKVPTTLAEYCIKTKVPSNDNSSDLLYDDLYDDDIDDEDEEEEDADCYDDDDSGNEES</sequence>
<dbReference type="EC" id="2.3.2.23" evidence="1"/>
<dbReference type="EMBL" id="AJ240086">
    <property type="protein sequence ID" value="CAC80335.1"/>
    <property type="molecule type" value="mRNA"/>
</dbReference>
<dbReference type="EMBL" id="AK003550">
    <property type="protein sequence ID" value="BAB22850.1"/>
    <property type="molecule type" value="mRNA"/>
</dbReference>
<dbReference type="EMBL" id="AK007517">
    <property type="protein sequence ID" value="BAB25085.1"/>
    <property type="molecule type" value="mRNA"/>
</dbReference>
<dbReference type="EMBL" id="AK075703">
    <property type="protein sequence ID" value="BAC35899.1"/>
    <property type="molecule type" value="mRNA"/>
</dbReference>
<dbReference type="EMBL" id="AK075714">
    <property type="protein sequence ID" value="BAC35904.1"/>
    <property type="molecule type" value="mRNA"/>
</dbReference>
<dbReference type="EMBL" id="AL807823">
    <property type="status" value="NOT_ANNOTATED_CDS"/>
    <property type="molecule type" value="Genomic_DNA"/>
</dbReference>
<dbReference type="EMBL" id="AL954379">
    <property type="status" value="NOT_ANNOTATED_CDS"/>
    <property type="molecule type" value="Genomic_DNA"/>
</dbReference>
<dbReference type="EMBL" id="BC011112">
    <property type="protein sequence ID" value="AAH11112.1"/>
    <property type="molecule type" value="mRNA"/>
</dbReference>
<dbReference type="CCDS" id="CCDS18057.1"/>
<dbReference type="RefSeq" id="NP_080551.1">
    <property type="nucleotide sequence ID" value="NM_026275.4"/>
</dbReference>
<dbReference type="SMR" id="Q6ZWZ2"/>
<dbReference type="BioGRID" id="212312">
    <property type="interactions" value="22"/>
</dbReference>
<dbReference type="FunCoup" id="Q6ZWZ2">
    <property type="interactions" value="2637"/>
</dbReference>
<dbReference type="IntAct" id="Q6ZWZ2">
    <property type="interactions" value="4"/>
</dbReference>
<dbReference type="MINT" id="Q6ZWZ2"/>
<dbReference type="STRING" id="10090.ENSMUSP00000038813"/>
<dbReference type="iPTMnet" id="Q6ZWZ2"/>
<dbReference type="PhosphoSitePlus" id="Q6ZWZ2"/>
<dbReference type="SwissPalm" id="Q6ZWZ2"/>
<dbReference type="jPOST" id="Q6ZWZ2"/>
<dbReference type="PaxDb" id="10090-ENSMUSP00000038813"/>
<dbReference type="PeptideAtlas" id="Q6ZWZ2"/>
<dbReference type="ProteomicsDB" id="298167"/>
<dbReference type="Pumba" id="Q6ZWZ2"/>
<dbReference type="Antibodypedia" id="25301">
    <property type="antibodies" value="165 antibodies from 30 providers"/>
</dbReference>
<dbReference type="DNASU" id="67615"/>
<dbReference type="Ensembl" id="ENSMUST00000040008.4">
    <property type="protein sequence ID" value="ENSMUSP00000038813.4"/>
    <property type="gene ID" value="ENSMUSG00000036241.4"/>
</dbReference>
<dbReference type="GeneID" id="67615"/>
<dbReference type="KEGG" id="mmu:67615"/>
<dbReference type="UCSC" id="uc008sij.1">
    <property type="organism name" value="mouse"/>
</dbReference>
<dbReference type="AGR" id="MGI:1914865"/>
<dbReference type="CTD" id="54926"/>
<dbReference type="MGI" id="MGI:1914865">
    <property type="gene designation" value="Ube2r2"/>
</dbReference>
<dbReference type="VEuPathDB" id="HostDB:ENSMUSG00000036241"/>
<dbReference type="eggNOG" id="KOG0425">
    <property type="taxonomic scope" value="Eukaryota"/>
</dbReference>
<dbReference type="GeneTree" id="ENSGT00940000158828"/>
<dbReference type="HOGENOM" id="CLU_030988_1_2_1"/>
<dbReference type="InParanoid" id="Q6ZWZ2"/>
<dbReference type="OMA" id="WNPTQNI"/>
<dbReference type="OrthoDB" id="19692at2759"/>
<dbReference type="PhylomeDB" id="Q6ZWZ2"/>
<dbReference type="TreeFam" id="TF101107"/>
<dbReference type="Reactome" id="R-MMU-8866652">
    <property type="pathway name" value="Synthesis of active ubiquitin: roles of E1 and E2 enzymes"/>
</dbReference>
<dbReference type="Reactome" id="R-MMU-983168">
    <property type="pathway name" value="Antigen processing: Ubiquitination &amp; Proteasome degradation"/>
</dbReference>
<dbReference type="UniPathway" id="UPA00143"/>
<dbReference type="BioGRID-ORCS" id="67615">
    <property type="hits" value="2 hits in 77 CRISPR screens"/>
</dbReference>
<dbReference type="ChiTaRS" id="Ube2r2">
    <property type="organism name" value="mouse"/>
</dbReference>
<dbReference type="PRO" id="PR:Q6ZWZ2"/>
<dbReference type="Proteomes" id="UP000000589">
    <property type="component" value="Chromosome 4"/>
</dbReference>
<dbReference type="RNAct" id="Q6ZWZ2">
    <property type="molecule type" value="protein"/>
</dbReference>
<dbReference type="Bgee" id="ENSMUSG00000036241">
    <property type="expression patterns" value="Expressed in undifferentiated genital tubercle and 268 other cell types or tissues"/>
</dbReference>
<dbReference type="GO" id="GO:0005524">
    <property type="term" value="F:ATP binding"/>
    <property type="evidence" value="ECO:0007669"/>
    <property type="project" value="UniProtKB-KW"/>
</dbReference>
<dbReference type="GO" id="GO:0061631">
    <property type="term" value="F:ubiquitin conjugating enzyme activity"/>
    <property type="evidence" value="ECO:0000266"/>
    <property type="project" value="MGI"/>
</dbReference>
<dbReference type="GO" id="GO:0004842">
    <property type="term" value="F:ubiquitin-protein transferase activity"/>
    <property type="evidence" value="ECO:0000250"/>
    <property type="project" value="UniProtKB"/>
</dbReference>
<dbReference type="GO" id="GO:0070936">
    <property type="term" value="P:protein K48-linked ubiquitination"/>
    <property type="evidence" value="ECO:0000250"/>
    <property type="project" value="UniProtKB"/>
</dbReference>
<dbReference type="GO" id="GO:0006513">
    <property type="term" value="P:protein monoubiquitination"/>
    <property type="evidence" value="ECO:0000250"/>
    <property type="project" value="UniProtKB"/>
</dbReference>
<dbReference type="CDD" id="cd23803">
    <property type="entry name" value="UBCc_UBE2R"/>
    <property type="match status" value="1"/>
</dbReference>
<dbReference type="FunFam" id="3.10.110.10:FF:000009">
    <property type="entry name" value="Ubiquitin-conjugating enzyme E2 R2"/>
    <property type="match status" value="1"/>
</dbReference>
<dbReference type="Gene3D" id="3.10.110.10">
    <property type="entry name" value="Ubiquitin Conjugating Enzyme"/>
    <property type="match status" value="1"/>
</dbReference>
<dbReference type="InterPro" id="IPR050113">
    <property type="entry name" value="Ub_conjugating_enzyme"/>
</dbReference>
<dbReference type="InterPro" id="IPR000608">
    <property type="entry name" value="UBQ-conjugat_E2_core"/>
</dbReference>
<dbReference type="InterPro" id="IPR023313">
    <property type="entry name" value="UBQ-conjugating_AS"/>
</dbReference>
<dbReference type="InterPro" id="IPR016135">
    <property type="entry name" value="UBQ-conjugating_enzyme/RWD"/>
</dbReference>
<dbReference type="PANTHER" id="PTHR24067">
    <property type="entry name" value="UBIQUITIN-CONJUGATING ENZYME E2"/>
    <property type="match status" value="1"/>
</dbReference>
<dbReference type="Pfam" id="PF00179">
    <property type="entry name" value="UQ_con"/>
    <property type="match status" value="1"/>
</dbReference>
<dbReference type="SMART" id="SM00212">
    <property type="entry name" value="UBCc"/>
    <property type="match status" value="1"/>
</dbReference>
<dbReference type="SUPFAM" id="SSF54495">
    <property type="entry name" value="UBC-like"/>
    <property type="match status" value="1"/>
</dbReference>
<dbReference type="PROSITE" id="PS00183">
    <property type="entry name" value="UBC_1"/>
    <property type="match status" value="1"/>
</dbReference>
<dbReference type="PROSITE" id="PS50127">
    <property type="entry name" value="UBC_2"/>
    <property type="match status" value="1"/>
</dbReference>
<reference key="1">
    <citation type="journal article" date="2002" name="Oncogene">
        <title>CK2-dependent phosphorylation of the E2 ubiquitin conjugating enzyme UBC3B induces its interaction with beta-TrCP and enhances beta-catenin degradation.</title>
        <authorList>
            <person name="Semplici F."/>
            <person name="Meggio F."/>
            <person name="Pinna L.A."/>
            <person name="Oliviero S."/>
        </authorList>
    </citation>
    <scope>NUCLEOTIDE SEQUENCE [MRNA]</scope>
</reference>
<reference key="2">
    <citation type="journal article" date="2005" name="Science">
        <title>The transcriptional landscape of the mammalian genome.</title>
        <authorList>
            <person name="Carninci P."/>
            <person name="Kasukawa T."/>
            <person name="Katayama S."/>
            <person name="Gough J."/>
            <person name="Frith M.C."/>
            <person name="Maeda N."/>
            <person name="Oyama R."/>
            <person name="Ravasi T."/>
            <person name="Lenhard B."/>
            <person name="Wells C."/>
            <person name="Kodzius R."/>
            <person name="Shimokawa K."/>
            <person name="Bajic V.B."/>
            <person name="Brenner S.E."/>
            <person name="Batalov S."/>
            <person name="Forrest A.R."/>
            <person name="Zavolan M."/>
            <person name="Davis M.J."/>
            <person name="Wilming L.G."/>
            <person name="Aidinis V."/>
            <person name="Allen J.E."/>
            <person name="Ambesi-Impiombato A."/>
            <person name="Apweiler R."/>
            <person name="Aturaliya R.N."/>
            <person name="Bailey T.L."/>
            <person name="Bansal M."/>
            <person name="Baxter L."/>
            <person name="Beisel K.W."/>
            <person name="Bersano T."/>
            <person name="Bono H."/>
            <person name="Chalk A.M."/>
            <person name="Chiu K.P."/>
            <person name="Choudhary V."/>
            <person name="Christoffels A."/>
            <person name="Clutterbuck D.R."/>
            <person name="Crowe M.L."/>
            <person name="Dalla E."/>
            <person name="Dalrymple B.P."/>
            <person name="de Bono B."/>
            <person name="Della Gatta G."/>
            <person name="di Bernardo D."/>
            <person name="Down T."/>
            <person name="Engstrom P."/>
            <person name="Fagiolini M."/>
            <person name="Faulkner G."/>
            <person name="Fletcher C.F."/>
            <person name="Fukushima T."/>
            <person name="Furuno M."/>
            <person name="Futaki S."/>
            <person name="Gariboldi M."/>
            <person name="Georgii-Hemming P."/>
            <person name="Gingeras T.R."/>
            <person name="Gojobori T."/>
            <person name="Green R.E."/>
            <person name="Gustincich S."/>
            <person name="Harbers M."/>
            <person name="Hayashi Y."/>
            <person name="Hensch T.K."/>
            <person name="Hirokawa N."/>
            <person name="Hill D."/>
            <person name="Huminiecki L."/>
            <person name="Iacono M."/>
            <person name="Ikeo K."/>
            <person name="Iwama A."/>
            <person name="Ishikawa T."/>
            <person name="Jakt M."/>
            <person name="Kanapin A."/>
            <person name="Katoh M."/>
            <person name="Kawasawa Y."/>
            <person name="Kelso J."/>
            <person name="Kitamura H."/>
            <person name="Kitano H."/>
            <person name="Kollias G."/>
            <person name="Krishnan S.P."/>
            <person name="Kruger A."/>
            <person name="Kummerfeld S.K."/>
            <person name="Kurochkin I.V."/>
            <person name="Lareau L.F."/>
            <person name="Lazarevic D."/>
            <person name="Lipovich L."/>
            <person name="Liu J."/>
            <person name="Liuni S."/>
            <person name="McWilliam S."/>
            <person name="Madan Babu M."/>
            <person name="Madera M."/>
            <person name="Marchionni L."/>
            <person name="Matsuda H."/>
            <person name="Matsuzawa S."/>
            <person name="Miki H."/>
            <person name="Mignone F."/>
            <person name="Miyake S."/>
            <person name="Morris K."/>
            <person name="Mottagui-Tabar S."/>
            <person name="Mulder N."/>
            <person name="Nakano N."/>
            <person name="Nakauchi H."/>
            <person name="Ng P."/>
            <person name="Nilsson R."/>
            <person name="Nishiguchi S."/>
            <person name="Nishikawa S."/>
            <person name="Nori F."/>
            <person name="Ohara O."/>
            <person name="Okazaki Y."/>
            <person name="Orlando V."/>
            <person name="Pang K.C."/>
            <person name="Pavan W.J."/>
            <person name="Pavesi G."/>
            <person name="Pesole G."/>
            <person name="Petrovsky N."/>
            <person name="Piazza S."/>
            <person name="Reed J."/>
            <person name="Reid J.F."/>
            <person name="Ring B.Z."/>
            <person name="Ringwald M."/>
            <person name="Rost B."/>
            <person name="Ruan Y."/>
            <person name="Salzberg S.L."/>
            <person name="Sandelin A."/>
            <person name="Schneider C."/>
            <person name="Schoenbach C."/>
            <person name="Sekiguchi K."/>
            <person name="Semple C.A."/>
            <person name="Seno S."/>
            <person name="Sessa L."/>
            <person name="Sheng Y."/>
            <person name="Shibata Y."/>
            <person name="Shimada H."/>
            <person name="Shimada K."/>
            <person name="Silva D."/>
            <person name="Sinclair B."/>
            <person name="Sperling S."/>
            <person name="Stupka E."/>
            <person name="Sugiura K."/>
            <person name="Sultana R."/>
            <person name="Takenaka Y."/>
            <person name="Taki K."/>
            <person name="Tammoja K."/>
            <person name="Tan S.L."/>
            <person name="Tang S."/>
            <person name="Taylor M.S."/>
            <person name="Tegner J."/>
            <person name="Teichmann S.A."/>
            <person name="Ueda H.R."/>
            <person name="van Nimwegen E."/>
            <person name="Verardo R."/>
            <person name="Wei C.L."/>
            <person name="Yagi K."/>
            <person name="Yamanishi H."/>
            <person name="Zabarovsky E."/>
            <person name="Zhu S."/>
            <person name="Zimmer A."/>
            <person name="Hide W."/>
            <person name="Bult C."/>
            <person name="Grimmond S.M."/>
            <person name="Teasdale R.D."/>
            <person name="Liu E.T."/>
            <person name="Brusic V."/>
            <person name="Quackenbush J."/>
            <person name="Wahlestedt C."/>
            <person name="Mattick J.S."/>
            <person name="Hume D.A."/>
            <person name="Kai C."/>
            <person name="Sasaki D."/>
            <person name="Tomaru Y."/>
            <person name="Fukuda S."/>
            <person name="Kanamori-Katayama M."/>
            <person name="Suzuki M."/>
            <person name="Aoki J."/>
            <person name="Arakawa T."/>
            <person name="Iida J."/>
            <person name="Imamura K."/>
            <person name="Itoh M."/>
            <person name="Kato T."/>
            <person name="Kawaji H."/>
            <person name="Kawagashira N."/>
            <person name="Kawashima T."/>
            <person name="Kojima M."/>
            <person name="Kondo S."/>
            <person name="Konno H."/>
            <person name="Nakano K."/>
            <person name="Ninomiya N."/>
            <person name="Nishio T."/>
            <person name="Okada M."/>
            <person name="Plessy C."/>
            <person name="Shibata K."/>
            <person name="Shiraki T."/>
            <person name="Suzuki S."/>
            <person name="Tagami M."/>
            <person name="Waki K."/>
            <person name="Watahiki A."/>
            <person name="Okamura-Oho Y."/>
            <person name="Suzuki H."/>
            <person name="Kawai J."/>
            <person name="Hayashizaki Y."/>
        </authorList>
    </citation>
    <scope>NUCLEOTIDE SEQUENCE [LARGE SCALE MRNA]</scope>
    <source>
        <strain>C57BL/6J</strain>
        <tissue>Liver</tissue>
        <tissue>Lung</tissue>
        <tissue>Pancreas</tissue>
    </source>
</reference>
<reference key="3">
    <citation type="journal article" date="2009" name="PLoS Biol.">
        <title>Lineage-specific biology revealed by a finished genome assembly of the mouse.</title>
        <authorList>
            <person name="Church D.M."/>
            <person name="Goodstadt L."/>
            <person name="Hillier L.W."/>
            <person name="Zody M.C."/>
            <person name="Goldstein S."/>
            <person name="She X."/>
            <person name="Bult C.J."/>
            <person name="Agarwala R."/>
            <person name="Cherry J.L."/>
            <person name="DiCuccio M."/>
            <person name="Hlavina W."/>
            <person name="Kapustin Y."/>
            <person name="Meric P."/>
            <person name="Maglott D."/>
            <person name="Birtle Z."/>
            <person name="Marques A.C."/>
            <person name="Graves T."/>
            <person name="Zhou S."/>
            <person name="Teague B."/>
            <person name="Potamousis K."/>
            <person name="Churas C."/>
            <person name="Place M."/>
            <person name="Herschleb J."/>
            <person name="Runnheim R."/>
            <person name="Forrest D."/>
            <person name="Amos-Landgraf J."/>
            <person name="Schwartz D.C."/>
            <person name="Cheng Z."/>
            <person name="Lindblad-Toh K."/>
            <person name="Eichler E.E."/>
            <person name="Ponting C.P."/>
        </authorList>
    </citation>
    <scope>NUCLEOTIDE SEQUENCE [LARGE SCALE GENOMIC DNA]</scope>
    <source>
        <strain>C57BL/6J</strain>
    </source>
</reference>
<reference key="4">
    <citation type="journal article" date="2004" name="Genome Res.">
        <title>The status, quality, and expansion of the NIH full-length cDNA project: the Mammalian Gene Collection (MGC).</title>
        <authorList>
            <consortium name="The MGC Project Team"/>
        </authorList>
    </citation>
    <scope>NUCLEOTIDE SEQUENCE [LARGE SCALE MRNA]</scope>
    <source>
        <strain>Czech II</strain>
        <tissue>Mammary tumor</tissue>
    </source>
</reference>
<reference key="5">
    <citation type="journal article" date="2010" name="Cell">
        <title>A tissue-specific atlas of mouse protein phosphorylation and expression.</title>
        <authorList>
            <person name="Huttlin E.L."/>
            <person name="Jedrychowski M.P."/>
            <person name="Elias J.E."/>
            <person name="Goswami T."/>
            <person name="Rad R."/>
            <person name="Beausoleil S.A."/>
            <person name="Villen J."/>
            <person name="Haas W."/>
            <person name="Sowa M.E."/>
            <person name="Gygi S.P."/>
        </authorList>
    </citation>
    <scope>IDENTIFICATION BY MASS SPECTROMETRY [LARGE SCALE ANALYSIS]</scope>
    <source>
        <tissue>Brain</tissue>
        <tissue>Lung</tissue>
        <tissue>Spleen</tissue>
        <tissue>Testis</tissue>
    </source>
</reference>
<gene>
    <name type="primary">Ube2r2</name>
    <name type="synonym">Cdc34b</name>
    <name type="synonym">Ubc3b</name>
</gene>
<feature type="chain" id="PRO_0000280514" description="Ubiquitin-conjugating enzyme E2 R2">
    <location>
        <begin position="1"/>
        <end position="238"/>
    </location>
</feature>
<feature type="domain" description="UBC core" evidence="2">
    <location>
        <begin position="8"/>
        <end position="174"/>
    </location>
</feature>
<feature type="region of interest" description="Important for ubiquitin transfer" evidence="1">
    <location>
        <begin position="98"/>
        <end position="113"/>
    </location>
</feature>
<feature type="region of interest" description="Disordered" evidence="3">
    <location>
        <begin position="194"/>
        <end position="238"/>
    </location>
</feature>
<feature type="compositionally biased region" description="Acidic residues" evidence="3">
    <location>
        <begin position="206"/>
        <end position="238"/>
    </location>
</feature>
<feature type="active site" description="Glycyl thioester intermediate" evidence="1">
    <location>
        <position position="93"/>
    </location>
</feature>
<feature type="modified residue" description="Phosphoserine; by CK2" evidence="1">
    <location>
        <position position="233"/>
    </location>
</feature>
<feature type="sequence conflict" description="In Ref. 2; BAC35899." evidence="4" ref="2">
    <original>E</original>
    <variation>D</variation>
    <location>
        <position position="16"/>
    </location>
</feature>
<feature type="sequence conflict" description="In Ref. 2; BAC35899." evidence="4" ref="2">
    <original>R</original>
    <variation>L</variation>
    <location>
        <position position="29"/>
    </location>
</feature>
<feature type="sequence conflict" description="In Ref. 2; BAC35899." evidence="4" ref="2">
    <original>V</original>
    <variation>L</variation>
    <location>
        <position position="33"/>
    </location>
</feature>
<feature type="sequence conflict" description="In Ref. 2; BAC35899." evidence="4" ref="2">
    <original>E</original>
    <variation>Y</variation>
    <location>
        <position position="35"/>
    </location>
</feature>
<feature type="sequence conflict" description="In Ref. 2; BAC35899." evidence="4" ref="2">
    <original>D</original>
    <variation>Y</variation>
    <location>
        <position position="37"/>
    </location>
</feature>
<feature type="sequence conflict" description="In Ref. 1; CAC80335." evidence="4" ref="1">
    <original>R</original>
    <variation>T</variation>
    <location>
        <position position="149"/>
    </location>
</feature>
<accession>Q6ZWZ2</accession>
<accession>Q8BW18</accession>
<accession>Q8VDE5</accession>
<organism>
    <name type="scientific">Mus musculus</name>
    <name type="common">Mouse</name>
    <dbReference type="NCBI Taxonomy" id="10090"/>
    <lineage>
        <taxon>Eukaryota</taxon>
        <taxon>Metazoa</taxon>
        <taxon>Chordata</taxon>
        <taxon>Craniata</taxon>
        <taxon>Vertebrata</taxon>
        <taxon>Euteleostomi</taxon>
        <taxon>Mammalia</taxon>
        <taxon>Eutheria</taxon>
        <taxon>Euarchontoglires</taxon>
        <taxon>Glires</taxon>
        <taxon>Rodentia</taxon>
        <taxon>Myomorpha</taxon>
        <taxon>Muroidea</taxon>
        <taxon>Muridae</taxon>
        <taxon>Murinae</taxon>
        <taxon>Mus</taxon>
        <taxon>Mus</taxon>
    </lineage>
</organism>
<protein>
    <recommendedName>
        <fullName>Ubiquitin-conjugating enzyme E2 R2</fullName>
        <ecNumber evidence="1">2.3.2.23</ecNumber>
    </recommendedName>
    <alternativeName>
        <fullName>E2 ubiquitin-conjugating enzyme R2</fullName>
    </alternativeName>
    <alternativeName>
        <fullName>Ubiquitin carrier protein R2</fullName>
    </alternativeName>
    <alternativeName>
        <fullName>Ubiquitin-conjugating enzyme E2-CDC34B</fullName>
    </alternativeName>
    <alternativeName>
        <fullName>Ubiquitin-protein ligase R2</fullName>
    </alternativeName>
</protein>
<evidence type="ECO:0000250" key="1">
    <source>
        <dbReference type="UniProtKB" id="Q712K3"/>
    </source>
</evidence>
<evidence type="ECO:0000255" key="2">
    <source>
        <dbReference type="PROSITE-ProRule" id="PRU00388"/>
    </source>
</evidence>
<evidence type="ECO:0000256" key="3">
    <source>
        <dbReference type="SAM" id="MobiDB-lite"/>
    </source>
</evidence>
<evidence type="ECO:0000305" key="4"/>
<name>UB2R2_MOUSE</name>